<evidence type="ECO:0000255" key="1">
    <source>
        <dbReference type="HAMAP-Rule" id="MF_00808"/>
    </source>
</evidence>
<proteinExistence type="inferred from homology"/>
<protein>
    <recommendedName>
        <fullName evidence="1">Photosystem II reaction center protein T</fullName>
        <shortName evidence="1">PSII-T</shortName>
    </recommendedName>
</protein>
<accession>Q6EYD6</accession>
<dbReference type="EMBL" id="AF528913">
    <property type="protein sequence ID" value="AAQ09437.1"/>
    <property type="molecule type" value="Genomic_DNA"/>
</dbReference>
<dbReference type="SMR" id="Q6EYD6"/>
<dbReference type="GO" id="GO:0009535">
    <property type="term" value="C:chloroplast thylakoid membrane"/>
    <property type="evidence" value="ECO:0007669"/>
    <property type="project" value="UniProtKB-SubCell"/>
</dbReference>
<dbReference type="GO" id="GO:0009539">
    <property type="term" value="C:photosystem II reaction center"/>
    <property type="evidence" value="ECO:0007669"/>
    <property type="project" value="InterPro"/>
</dbReference>
<dbReference type="GO" id="GO:0015979">
    <property type="term" value="P:photosynthesis"/>
    <property type="evidence" value="ECO:0007669"/>
    <property type="project" value="UniProtKB-UniRule"/>
</dbReference>
<dbReference type="HAMAP" id="MF_00808">
    <property type="entry name" value="PSII_PsbT"/>
    <property type="match status" value="1"/>
</dbReference>
<dbReference type="InterPro" id="IPR001743">
    <property type="entry name" value="PSII_PsbT"/>
</dbReference>
<dbReference type="InterPro" id="IPR037268">
    <property type="entry name" value="PSII_PsbT_sf"/>
</dbReference>
<dbReference type="PANTHER" id="PTHR36411">
    <property type="match status" value="1"/>
</dbReference>
<dbReference type="PANTHER" id="PTHR36411:SF2">
    <property type="entry name" value="PHOTOSYSTEM II REACTION CENTER PROTEIN T"/>
    <property type="match status" value="1"/>
</dbReference>
<dbReference type="Pfam" id="PF01405">
    <property type="entry name" value="PsbT"/>
    <property type="match status" value="1"/>
</dbReference>
<dbReference type="SUPFAM" id="SSF161029">
    <property type="entry name" value="Photosystem II reaction center protein T, PsbT"/>
    <property type="match status" value="1"/>
</dbReference>
<gene>
    <name evidence="1" type="primary">psbT</name>
</gene>
<reference key="1">
    <citation type="submission" date="2002-07" db="EMBL/GenBank/DDBJ databases">
        <title>Parsing out signal and noise for seed-plant phylogenetic inference.</title>
        <authorList>
            <person name="Graham S.W."/>
            <person name="Rai H.S."/>
            <person name="Ikegami K."/>
            <person name="Reeves P.A."/>
            <person name="Olmstead R.G."/>
        </authorList>
    </citation>
    <scope>NUCLEOTIDE SEQUENCE [GENOMIC DNA]</scope>
</reference>
<name>PSBT_STEPS</name>
<sequence length="35" mass="4077">MEALVYTFLLVSTLGIIFFAIFFREPPKVPTKKMK</sequence>
<keyword id="KW-0150">Chloroplast</keyword>
<keyword id="KW-0472">Membrane</keyword>
<keyword id="KW-0602">Photosynthesis</keyword>
<keyword id="KW-0604">Photosystem II</keyword>
<keyword id="KW-0934">Plastid</keyword>
<keyword id="KW-0793">Thylakoid</keyword>
<keyword id="KW-0812">Transmembrane</keyword>
<keyword id="KW-1133">Transmembrane helix</keyword>
<feature type="chain" id="PRO_0000217987" description="Photosystem II reaction center protein T">
    <location>
        <begin position="1"/>
        <end position="35"/>
    </location>
</feature>
<feature type="transmembrane region" description="Helical" evidence="1">
    <location>
        <begin position="3"/>
        <end position="23"/>
    </location>
</feature>
<organism>
    <name type="scientific">Stewartia pseudocamellia</name>
    <name type="common">Japanese stewartia</name>
    <name type="synonym">Stewartia koreana</name>
    <dbReference type="NCBI Taxonomy" id="59679"/>
    <lineage>
        <taxon>Eukaryota</taxon>
        <taxon>Viridiplantae</taxon>
        <taxon>Streptophyta</taxon>
        <taxon>Embryophyta</taxon>
        <taxon>Tracheophyta</taxon>
        <taxon>Spermatophyta</taxon>
        <taxon>Magnoliopsida</taxon>
        <taxon>eudicotyledons</taxon>
        <taxon>Gunneridae</taxon>
        <taxon>Pentapetalae</taxon>
        <taxon>asterids</taxon>
        <taxon>Ericales</taxon>
        <taxon>Theaceae</taxon>
        <taxon>Stewartia</taxon>
    </lineage>
</organism>
<comment type="function">
    <text evidence="1">Found at the monomer-monomer interface of the photosystem II (PS II) dimer, plays a role in assembly and dimerization of PSII. PSII is a light-driven water plastoquinone oxidoreductase, using light energy to abstract electrons from H(2)O, generating a proton gradient subsequently used for ATP formation.</text>
</comment>
<comment type="subunit">
    <text evidence="1">PSII is composed of 1 copy each of membrane proteins PsbA, PsbB, PsbC, PsbD, PsbE, PsbF, PsbH, PsbI, PsbJ, PsbK, PsbL, PsbM, PsbT, PsbY, PsbZ, Psb30/Ycf12, at least 3 peripheral proteins of the oxygen-evolving complex and a large number of cofactors. It forms dimeric complexes.</text>
</comment>
<comment type="subcellular location">
    <subcellularLocation>
        <location evidence="1">Plastid</location>
        <location evidence="1">Chloroplast thylakoid membrane</location>
        <topology evidence="1">Single-pass membrane protein</topology>
    </subcellularLocation>
</comment>
<comment type="similarity">
    <text evidence="1">Belongs to the PsbT family.</text>
</comment>
<geneLocation type="chloroplast"/>